<accession>Q03SS3</accession>
<organism>
    <name type="scientific">Levilactobacillus brevis (strain ATCC 367 / BCRC 12310 / CIP 105137 / JCM 1170 / LMG 11437 / NCIMB 947 / NCTC 947)</name>
    <name type="common">Lactobacillus brevis</name>
    <dbReference type="NCBI Taxonomy" id="387344"/>
    <lineage>
        <taxon>Bacteria</taxon>
        <taxon>Bacillati</taxon>
        <taxon>Bacillota</taxon>
        <taxon>Bacilli</taxon>
        <taxon>Lactobacillales</taxon>
        <taxon>Lactobacillaceae</taxon>
        <taxon>Levilactobacillus</taxon>
    </lineage>
</organism>
<name>KTHY_LEVBA</name>
<protein>
    <recommendedName>
        <fullName evidence="1">Thymidylate kinase</fullName>
        <ecNumber evidence="1">2.7.4.9</ecNumber>
    </recommendedName>
    <alternativeName>
        <fullName evidence="1">dTMP kinase</fullName>
    </alternativeName>
</protein>
<sequence>MSGTFISFEGPDGAGKTSALQAITTQIKPVLGDQLVITREPGGNPISESIRAIILDRANTAMDYRTEALLYAAARRQHLAQTILPALAADKLVLCDRYVDSSVAYQGAGRQIGEDAVAQMNTFATDGLLPAVTVYFDVPAEIGLRRIQAHRDPQKVDRLDVEQAAFHDRVRAAYLRLQAAHPDRIKLIDATQKREAVVTTALTLIKQAAQNYFD</sequence>
<reference key="1">
    <citation type="journal article" date="2006" name="Proc. Natl. Acad. Sci. U.S.A.">
        <title>Comparative genomics of the lactic acid bacteria.</title>
        <authorList>
            <person name="Makarova K.S."/>
            <person name="Slesarev A."/>
            <person name="Wolf Y.I."/>
            <person name="Sorokin A."/>
            <person name="Mirkin B."/>
            <person name="Koonin E.V."/>
            <person name="Pavlov A."/>
            <person name="Pavlova N."/>
            <person name="Karamychev V."/>
            <person name="Polouchine N."/>
            <person name="Shakhova V."/>
            <person name="Grigoriev I."/>
            <person name="Lou Y."/>
            <person name="Rohksar D."/>
            <person name="Lucas S."/>
            <person name="Huang K."/>
            <person name="Goodstein D.M."/>
            <person name="Hawkins T."/>
            <person name="Plengvidhya V."/>
            <person name="Welker D."/>
            <person name="Hughes J."/>
            <person name="Goh Y."/>
            <person name="Benson A."/>
            <person name="Baldwin K."/>
            <person name="Lee J.-H."/>
            <person name="Diaz-Muniz I."/>
            <person name="Dosti B."/>
            <person name="Smeianov V."/>
            <person name="Wechter W."/>
            <person name="Barabote R."/>
            <person name="Lorca G."/>
            <person name="Altermann E."/>
            <person name="Barrangou R."/>
            <person name="Ganesan B."/>
            <person name="Xie Y."/>
            <person name="Rawsthorne H."/>
            <person name="Tamir D."/>
            <person name="Parker C."/>
            <person name="Breidt F."/>
            <person name="Broadbent J.R."/>
            <person name="Hutkins R."/>
            <person name="O'Sullivan D."/>
            <person name="Steele J."/>
            <person name="Unlu G."/>
            <person name="Saier M.H. Jr."/>
            <person name="Klaenhammer T."/>
            <person name="Richardson P."/>
            <person name="Kozyavkin S."/>
            <person name="Weimer B.C."/>
            <person name="Mills D.A."/>
        </authorList>
    </citation>
    <scope>NUCLEOTIDE SEQUENCE [LARGE SCALE GENOMIC DNA]</scope>
    <source>
        <strain>ATCC 367 / BCRC 12310 / CIP 105137 / JCM 1170 / LMG 11437 / NCIMB 947 / NCTC 947</strain>
    </source>
</reference>
<gene>
    <name evidence="1" type="primary">tmk</name>
    <name type="ordered locus">LVIS_0604</name>
</gene>
<feature type="chain" id="PRO_1000023206" description="Thymidylate kinase">
    <location>
        <begin position="1"/>
        <end position="214"/>
    </location>
</feature>
<feature type="binding site" evidence="1">
    <location>
        <begin position="10"/>
        <end position="17"/>
    </location>
    <ligand>
        <name>ATP</name>
        <dbReference type="ChEBI" id="CHEBI:30616"/>
    </ligand>
</feature>
<proteinExistence type="inferred from homology"/>
<keyword id="KW-0067">ATP-binding</keyword>
<keyword id="KW-0418">Kinase</keyword>
<keyword id="KW-0545">Nucleotide biosynthesis</keyword>
<keyword id="KW-0547">Nucleotide-binding</keyword>
<keyword id="KW-1185">Reference proteome</keyword>
<keyword id="KW-0808">Transferase</keyword>
<comment type="function">
    <text evidence="1">Phosphorylation of dTMP to form dTDP in both de novo and salvage pathways of dTTP synthesis.</text>
</comment>
<comment type="catalytic activity">
    <reaction evidence="1">
        <text>dTMP + ATP = dTDP + ADP</text>
        <dbReference type="Rhea" id="RHEA:13517"/>
        <dbReference type="ChEBI" id="CHEBI:30616"/>
        <dbReference type="ChEBI" id="CHEBI:58369"/>
        <dbReference type="ChEBI" id="CHEBI:63528"/>
        <dbReference type="ChEBI" id="CHEBI:456216"/>
        <dbReference type="EC" id="2.7.4.9"/>
    </reaction>
</comment>
<comment type="similarity">
    <text evidence="1">Belongs to the thymidylate kinase family.</text>
</comment>
<evidence type="ECO:0000255" key="1">
    <source>
        <dbReference type="HAMAP-Rule" id="MF_00165"/>
    </source>
</evidence>
<dbReference type="EC" id="2.7.4.9" evidence="1"/>
<dbReference type="EMBL" id="CP000416">
    <property type="protein sequence ID" value="ABJ63749.1"/>
    <property type="molecule type" value="Genomic_DNA"/>
</dbReference>
<dbReference type="RefSeq" id="WP_011667374.1">
    <property type="nucleotide sequence ID" value="NC_008497.1"/>
</dbReference>
<dbReference type="SMR" id="Q03SS3"/>
<dbReference type="STRING" id="387344.LVIS_0604"/>
<dbReference type="KEGG" id="lbr:LVIS_0604"/>
<dbReference type="PATRIC" id="fig|387344.15.peg.585"/>
<dbReference type="eggNOG" id="COG0125">
    <property type="taxonomic scope" value="Bacteria"/>
</dbReference>
<dbReference type="HOGENOM" id="CLU_049131_0_2_9"/>
<dbReference type="Proteomes" id="UP000001652">
    <property type="component" value="Chromosome"/>
</dbReference>
<dbReference type="GO" id="GO:0005829">
    <property type="term" value="C:cytosol"/>
    <property type="evidence" value="ECO:0007669"/>
    <property type="project" value="TreeGrafter"/>
</dbReference>
<dbReference type="GO" id="GO:0005524">
    <property type="term" value="F:ATP binding"/>
    <property type="evidence" value="ECO:0007669"/>
    <property type="project" value="UniProtKB-UniRule"/>
</dbReference>
<dbReference type="GO" id="GO:0004798">
    <property type="term" value="F:dTMP kinase activity"/>
    <property type="evidence" value="ECO:0007669"/>
    <property type="project" value="UniProtKB-UniRule"/>
</dbReference>
<dbReference type="GO" id="GO:0006233">
    <property type="term" value="P:dTDP biosynthetic process"/>
    <property type="evidence" value="ECO:0007669"/>
    <property type="project" value="InterPro"/>
</dbReference>
<dbReference type="GO" id="GO:0006235">
    <property type="term" value="P:dTTP biosynthetic process"/>
    <property type="evidence" value="ECO:0007669"/>
    <property type="project" value="UniProtKB-UniRule"/>
</dbReference>
<dbReference type="GO" id="GO:0006227">
    <property type="term" value="P:dUDP biosynthetic process"/>
    <property type="evidence" value="ECO:0007669"/>
    <property type="project" value="TreeGrafter"/>
</dbReference>
<dbReference type="CDD" id="cd01672">
    <property type="entry name" value="TMPK"/>
    <property type="match status" value="1"/>
</dbReference>
<dbReference type="FunFam" id="3.40.50.300:FF:000225">
    <property type="entry name" value="Thymidylate kinase"/>
    <property type="match status" value="1"/>
</dbReference>
<dbReference type="Gene3D" id="3.40.50.300">
    <property type="entry name" value="P-loop containing nucleotide triphosphate hydrolases"/>
    <property type="match status" value="1"/>
</dbReference>
<dbReference type="HAMAP" id="MF_00165">
    <property type="entry name" value="Thymidylate_kinase"/>
    <property type="match status" value="1"/>
</dbReference>
<dbReference type="InterPro" id="IPR027417">
    <property type="entry name" value="P-loop_NTPase"/>
</dbReference>
<dbReference type="InterPro" id="IPR039430">
    <property type="entry name" value="Thymidylate_kin-like_dom"/>
</dbReference>
<dbReference type="InterPro" id="IPR018095">
    <property type="entry name" value="Thymidylate_kin_CS"/>
</dbReference>
<dbReference type="InterPro" id="IPR018094">
    <property type="entry name" value="Thymidylate_kinase"/>
</dbReference>
<dbReference type="NCBIfam" id="TIGR00041">
    <property type="entry name" value="DTMP_kinase"/>
    <property type="match status" value="1"/>
</dbReference>
<dbReference type="PANTHER" id="PTHR10344">
    <property type="entry name" value="THYMIDYLATE KINASE"/>
    <property type="match status" value="1"/>
</dbReference>
<dbReference type="PANTHER" id="PTHR10344:SF4">
    <property type="entry name" value="UMP-CMP KINASE 2, MITOCHONDRIAL"/>
    <property type="match status" value="1"/>
</dbReference>
<dbReference type="Pfam" id="PF02223">
    <property type="entry name" value="Thymidylate_kin"/>
    <property type="match status" value="1"/>
</dbReference>
<dbReference type="SUPFAM" id="SSF52540">
    <property type="entry name" value="P-loop containing nucleoside triphosphate hydrolases"/>
    <property type="match status" value="1"/>
</dbReference>
<dbReference type="PROSITE" id="PS01331">
    <property type="entry name" value="THYMIDYLATE_KINASE"/>
    <property type="match status" value="1"/>
</dbReference>